<sequence>MKEIERRCLRALIGIVQNIYDQMKAGQVPELHIATRTKYNIEFNEESEVWVYGDRKSVRSAKTVKGAYRILKMTYVIGFLKEQLNLNKSSTLRELYYISEGWGAAKFEEQPESDRLVEDLEILTNFQREHFHIRPEEDGATVIGPLRVREETRRGVREIHCQDDVGEGGYQIPVNVDKIEFVDHDAKFVIAIETGGMRDRLVENGFDEKYDAIIVHLKGQPARSTRRLLRRLNTELNLPVVVFTDGDPWSYRIFASVAYGSIKSAHLSEYLATPAAQFVGIRPTDIVKYDLPADKLTEEDIKALNAILTDPRFDSEFWKKEVNLQLEINKKSEQQALAKYGLDYVTDVYLPERLSELGVI</sequence>
<name>TOP6A_ARCFU</name>
<reference key="1">
    <citation type="journal article" date="1997" name="Nature">
        <title>The complete genome sequence of the hyperthermophilic, sulphate-reducing archaeon Archaeoglobus fulgidus.</title>
        <authorList>
            <person name="Klenk H.-P."/>
            <person name="Clayton R.A."/>
            <person name="Tomb J.-F."/>
            <person name="White O."/>
            <person name="Nelson K.E."/>
            <person name="Ketchum K.A."/>
            <person name="Dodson R.J."/>
            <person name="Gwinn M.L."/>
            <person name="Hickey E.K."/>
            <person name="Peterson J.D."/>
            <person name="Richardson D.L."/>
            <person name="Kerlavage A.R."/>
            <person name="Graham D.E."/>
            <person name="Kyrpides N.C."/>
            <person name="Fleischmann R.D."/>
            <person name="Quackenbush J."/>
            <person name="Lee N.H."/>
            <person name="Sutton G.G."/>
            <person name="Gill S.R."/>
            <person name="Kirkness E.F."/>
            <person name="Dougherty B.A."/>
            <person name="McKenney K."/>
            <person name="Adams M.D."/>
            <person name="Loftus B.J."/>
            <person name="Peterson S.N."/>
            <person name="Reich C.I."/>
            <person name="McNeil L.K."/>
            <person name="Badger J.H."/>
            <person name="Glodek A."/>
            <person name="Zhou L."/>
            <person name="Overbeek R."/>
            <person name="Gocayne J.D."/>
            <person name="Weidman J.F."/>
            <person name="McDonald L.A."/>
            <person name="Utterback T.R."/>
            <person name="Cotton M.D."/>
            <person name="Spriggs T."/>
            <person name="Artiach P."/>
            <person name="Kaine B.P."/>
            <person name="Sykes S.M."/>
            <person name="Sadow P.W."/>
            <person name="D'Andrea K.P."/>
            <person name="Bowman C."/>
            <person name="Fujii C."/>
            <person name="Garland S.A."/>
            <person name="Mason T.M."/>
            <person name="Olsen G.J."/>
            <person name="Fraser C.M."/>
            <person name="Smith H.O."/>
            <person name="Woese C.R."/>
            <person name="Venter J.C."/>
        </authorList>
    </citation>
    <scope>NUCLEOTIDE SEQUENCE [LARGE SCALE GENOMIC DNA]</scope>
    <source>
        <strain>ATCC 49558 / DSM 4304 / JCM 9628 / NBRC 100126 / VC-16</strain>
    </source>
</reference>
<gene>
    <name evidence="1" type="primary">top6A</name>
    <name type="ordered locus">AF_0940</name>
</gene>
<accession>O29322</accession>
<evidence type="ECO:0000255" key="1">
    <source>
        <dbReference type="HAMAP-Rule" id="MF_00132"/>
    </source>
</evidence>
<evidence type="ECO:0000255" key="2">
    <source>
        <dbReference type="PROSITE-ProRule" id="PRU01385"/>
    </source>
</evidence>
<feature type="chain" id="PRO_0000145445" description="Type 2 DNA topoisomerase 6 subunit A">
    <location>
        <begin position="1"/>
        <end position="360"/>
    </location>
</feature>
<feature type="domain" description="Topo IIA-type catalytic" evidence="2">
    <location>
        <begin position="3"/>
        <end position="140"/>
    </location>
</feature>
<feature type="active site" description="O-(5'-phospho-DNA)-tyrosine intermediate" evidence="2">
    <location>
        <position position="97"/>
    </location>
</feature>
<feature type="binding site" evidence="1">
    <location>
        <position position="193"/>
    </location>
    <ligand>
        <name>Mg(2+)</name>
        <dbReference type="ChEBI" id="CHEBI:18420"/>
    </ligand>
</feature>
<feature type="binding site" evidence="1">
    <location>
        <position position="245"/>
    </location>
    <ligand>
        <name>Mg(2+)</name>
        <dbReference type="ChEBI" id="CHEBI:18420"/>
    </ligand>
</feature>
<proteinExistence type="inferred from homology"/>
<comment type="function">
    <text evidence="1">Relaxes both positive and negative superturns and exhibits a strong decatenase activity.</text>
</comment>
<comment type="catalytic activity">
    <reaction evidence="1">
        <text>ATP-dependent breakage, passage and rejoining of double-stranded DNA.</text>
        <dbReference type="EC" id="5.6.2.2"/>
    </reaction>
</comment>
<comment type="cofactor">
    <cofactor evidence="1">
        <name>Mg(2+)</name>
        <dbReference type="ChEBI" id="CHEBI:18420"/>
    </cofactor>
</comment>
<comment type="subunit">
    <text evidence="1">Homodimer. Heterotetramer of two Top6A and two Top6B chains.</text>
</comment>
<comment type="similarity">
    <text evidence="1">Belongs to the TOP6A family.</text>
</comment>
<keyword id="KW-0067">ATP-binding</keyword>
<keyword id="KW-0238">DNA-binding</keyword>
<keyword id="KW-0413">Isomerase</keyword>
<keyword id="KW-0460">Magnesium</keyword>
<keyword id="KW-0479">Metal-binding</keyword>
<keyword id="KW-0547">Nucleotide-binding</keyword>
<keyword id="KW-1185">Reference proteome</keyword>
<keyword id="KW-0799">Topoisomerase</keyword>
<dbReference type="EC" id="5.6.2.2" evidence="1"/>
<dbReference type="EMBL" id="AE000782">
    <property type="protein sequence ID" value="AAB90299.1"/>
    <property type="molecule type" value="Genomic_DNA"/>
</dbReference>
<dbReference type="PIR" id="D69367">
    <property type="entry name" value="D69367"/>
</dbReference>
<dbReference type="RefSeq" id="WP_010878440.1">
    <property type="nucleotide sequence ID" value="NC_000917.1"/>
</dbReference>
<dbReference type="SMR" id="O29322"/>
<dbReference type="STRING" id="224325.AF_0940"/>
<dbReference type="PaxDb" id="224325-AF_0940"/>
<dbReference type="EnsemblBacteria" id="AAB90299">
    <property type="protein sequence ID" value="AAB90299"/>
    <property type="gene ID" value="AF_0940"/>
</dbReference>
<dbReference type="KEGG" id="afu:AF_0940"/>
<dbReference type="eggNOG" id="arCOG04143">
    <property type="taxonomic scope" value="Archaea"/>
</dbReference>
<dbReference type="HOGENOM" id="CLU_037229_1_0_2"/>
<dbReference type="OrthoDB" id="5866at2157"/>
<dbReference type="PhylomeDB" id="O29322"/>
<dbReference type="Proteomes" id="UP000002199">
    <property type="component" value="Chromosome"/>
</dbReference>
<dbReference type="GO" id="GO:0005694">
    <property type="term" value="C:chromosome"/>
    <property type="evidence" value="ECO:0007669"/>
    <property type="project" value="InterPro"/>
</dbReference>
<dbReference type="GO" id="GO:0005524">
    <property type="term" value="F:ATP binding"/>
    <property type="evidence" value="ECO:0007669"/>
    <property type="project" value="UniProtKB-KW"/>
</dbReference>
<dbReference type="GO" id="GO:0003677">
    <property type="term" value="F:DNA binding"/>
    <property type="evidence" value="ECO:0007669"/>
    <property type="project" value="UniProtKB-UniRule"/>
</dbReference>
<dbReference type="GO" id="GO:0003918">
    <property type="term" value="F:DNA topoisomerase type II (double strand cut, ATP-hydrolyzing) activity"/>
    <property type="evidence" value="ECO:0007669"/>
    <property type="project" value="UniProtKB-UniRule"/>
</dbReference>
<dbReference type="GO" id="GO:0000287">
    <property type="term" value="F:magnesium ion binding"/>
    <property type="evidence" value="ECO:0007669"/>
    <property type="project" value="UniProtKB-UniRule"/>
</dbReference>
<dbReference type="GO" id="GO:0006265">
    <property type="term" value="P:DNA topological change"/>
    <property type="evidence" value="ECO:0007669"/>
    <property type="project" value="UniProtKB-UniRule"/>
</dbReference>
<dbReference type="CDD" id="cd00223">
    <property type="entry name" value="TOPRIM_TopoIIB_SPO"/>
    <property type="match status" value="1"/>
</dbReference>
<dbReference type="FunFam" id="3.40.1360.10:FF:000011">
    <property type="entry name" value="Type 2 DNA topoisomerase 6 subunit A"/>
    <property type="match status" value="1"/>
</dbReference>
<dbReference type="Gene3D" id="3.40.1360.10">
    <property type="match status" value="1"/>
</dbReference>
<dbReference type="Gene3D" id="1.10.10.10">
    <property type="entry name" value="Winged helix-like DNA-binding domain superfamily/Winged helix DNA-binding domain"/>
    <property type="match status" value="1"/>
</dbReference>
<dbReference type="HAMAP" id="MF_00132">
    <property type="entry name" value="Top6A"/>
    <property type="match status" value="1"/>
</dbReference>
<dbReference type="InterPro" id="IPR002815">
    <property type="entry name" value="Spo11/TopoVI_A"/>
</dbReference>
<dbReference type="InterPro" id="IPR013049">
    <property type="entry name" value="Spo11/TopoVI_A_N"/>
</dbReference>
<dbReference type="InterPro" id="IPR036078">
    <property type="entry name" value="Spo11/TopoVI_A_sf"/>
</dbReference>
<dbReference type="InterPro" id="IPR049333">
    <property type="entry name" value="Topo_VI_alpha"/>
</dbReference>
<dbReference type="InterPro" id="IPR004085">
    <property type="entry name" value="TopoVI_A"/>
</dbReference>
<dbReference type="InterPro" id="IPR034136">
    <property type="entry name" value="TOPRIM_Topo6A/Spo11"/>
</dbReference>
<dbReference type="InterPro" id="IPR036388">
    <property type="entry name" value="WH-like_DNA-bd_sf"/>
</dbReference>
<dbReference type="NCBIfam" id="NF003332">
    <property type="entry name" value="PRK04342.1-1"/>
    <property type="match status" value="1"/>
</dbReference>
<dbReference type="PANTHER" id="PTHR10848">
    <property type="entry name" value="MEIOTIC RECOMBINATION PROTEIN SPO11"/>
    <property type="match status" value="1"/>
</dbReference>
<dbReference type="PANTHER" id="PTHR10848:SF0">
    <property type="entry name" value="MEIOTIC RECOMBINATION PROTEIN SPO11"/>
    <property type="match status" value="1"/>
</dbReference>
<dbReference type="Pfam" id="PF21180">
    <property type="entry name" value="TOP6A-Spo11_Toprim"/>
    <property type="match status" value="1"/>
</dbReference>
<dbReference type="Pfam" id="PF20768">
    <property type="entry name" value="Topo_VI_alpha"/>
    <property type="match status" value="1"/>
</dbReference>
<dbReference type="Pfam" id="PF04406">
    <property type="entry name" value="TP6A_N"/>
    <property type="match status" value="1"/>
</dbReference>
<dbReference type="PRINTS" id="PR01550">
    <property type="entry name" value="TOP6AFAMILY"/>
</dbReference>
<dbReference type="PRINTS" id="PR01552">
    <property type="entry name" value="TPISMRASE6A"/>
</dbReference>
<dbReference type="SUPFAM" id="SSF56726">
    <property type="entry name" value="DNA topoisomerase IV, alpha subunit"/>
    <property type="match status" value="1"/>
</dbReference>
<dbReference type="PROSITE" id="PS52041">
    <property type="entry name" value="TOPO_IIB"/>
    <property type="match status" value="1"/>
</dbReference>
<organism>
    <name type="scientific">Archaeoglobus fulgidus (strain ATCC 49558 / DSM 4304 / JCM 9628 / NBRC 100126 / VC-16)</name>
    <dbReference type="NCBI Taxonomy" id="224325"/>
    <lineage>
        <taxon>Archaea</taxon>
        <taxon>Methanobacteriati</taxon>
        <taxon>Methanobacteriota</taxon>
        <taxon>Archaeoglobi</taxon>
        <taxon>Archaeoglobales</taxon>
        <taxon>Archaeoglobaceae</taxon>
        <taxon>Archaeoglobus</taxon>
    </lineage>
</organism>
<protein>
    <recommendedName>
        <fullName evidence="1">Type 2 DNA topoisomerase 6 subunit A</fullName>
        <ecNumber evidence="1">5.6.2.2</ecNumber>
    </recommendedName>
    <alternativeName>
        <fullName evidence="1">Type II DNA topoisomerase VI subunit A</fullName>
    </alternativeName>
</protein>